<keyword id="KW-0067">ATP-binding</keyword>
<keyword id="KW-0119">Carbohydrate metabolism</keyword>
<keyword id="KW-0418">Kinase</keyword>
<keyword id="KW-0479">Metal-binding</keyword>
<keyword id="KW-0547">Nucleotide-binding</keyword>
<keyword id="KW-1185">Reference proteome</keyword>
<keyword id="KW-0808">Transferase</keyword>
<keyword id="KW-0862">Zinc</keyword>
<name>NANK2_ECOL6</name>
<protein>
    <recommendedName>
        <fullName>N-acetylmannosamine kinase</fullName>
        <ecNumber>2.7.1.60</ecNumber>
    </recommendedName>
    <alternativeName>
        <fullName>ManNAc kinase</fullName>
    </alternativeName>
    <alternativeName>
        <fullName>N-acetyl-D-mannosamine kinase</fullName>
    </alternativeName>
</protein>
<feature type="chain" id="PRO_0000095698" description="N-acetylmannosamine kinase">
    <location>
        <begin position="1"/>
        <end position="291"/>
    </location>
</feature>
<feature type="binding site" evidence="2">
    <location>
        <begin position="5"/>
        <end position="12"/>
    </location>
    <ligand>
        <name>ATP</name>
        <dbReference type="ChEBI" id="CHEBI:30616"/>
    </ligand>
</feature>
<feature type="binding site" evidence="2">
    <location>
        <begin position="132"/>
        <end position="139"/>
    </location>
    <ligand>
        <name>ATP</name>
        <dbReference type="ChEBI" id="CHEBI:30616"/>
    </ligand>
</feature>
<feature type="binding site" evidence="1">
    <location>
        <position position="156"/>
    </location>
    <ligand>
        <name>Zn(2+)</name>
        <dbReference type="ChEBI" id="CHEBI:29105"/>
    </ligand>
</feature>
<feature type="binding site" evidence="1">
    <location>
        <position position="166"/>
    </location>
    <ligand>
        <name>Zn(2+)</name>
        <dbReference type="ChEBI" id="CHEBI:29105"/>
    </ligand>
</feature>
<feature type="binding site" evidence="1">
    <location>
        <position position="168"/>
    </location>
    <ligand>
        <name>Zn(2+)</name>
        <dbReference type="ChEBI" id="CHEBI:29105"/>
    </ligand>
</feature>
<feature type="binding site" evidence="1">
    <location>
        <position position="173"/>
    </location>
    <ligand>
        <name>Zn(2+)</name>
        <dbReference type="ChEBI" id="CHEBI:29105"/>
    </ligand>
</feature>
<dbReference type="EC" id="2.7.1.60"/>
<dbReference type="EMBL" id="AE014075">
    <property type="protein sequence ID" value="AAN82086.1"/>
    <property type="molecule type" value="Genomic_DNA"/>
</dbReference>
<dbReference type="RefSeq" id="WP_000629094.1">
    <property type="nucleotide sequence ID" value="NZ_CP051263.1"/>
</dbReference>
<dbReference type="SMR" id="Q8FDU8"/>
<dbReference type="STRING" id="199310.c3638"/>
<dbReference type="KEGG" id="ecc:c3638"/>
<dbReference type="eggNOG" id="COG1940">
    <property type="taxonomic scope" value="Bacteria"/>
</dbReference>
<dbReference type="HOGENOM" id="CLU_036604_0_4_6"/>
<dbReference type="BioCyc" id="ECOL199310:C3638-MONOMER"/>
<dbReference type="UniPathway" id="UPA00629">
    <property type="reaction ID" value="UER00681"/>
</dbReference>
<dbReference type="Proteomes" id="UP000001410">
    <property type="component" value="Chromosome"/>
</dbReference>
<dbReference type="GO" id="GO:0005524">
    <property type="term" value="F:ATP binding"/>
    <property type="evidence" value="ECO:0007669"/>
    <property type="project" value="UniProtKB-UniRule"/>
</dbReference>
<dbReference type="GO" id="GO:0009384">
    <property type="term" value="F:N-acylmannosamine kinase activity"/>
    <property type="evidence" value="ECO:0007669"/>
    <property type="project" value="UniProtKB-UniRule"/>
</dbReference>
<dbReference type="GO" id="GO:0008270">
    <property type="term" value="F:zinc ion binding"/>
    <property type="evidence" value="ECO:0007669"/>
    <property type="project" value="UniProtKB-UniRule"/>
</dbReference>
<dbReference type="GO" id="GO:0019262">
    <property type="term" value="P:N-acetylneuraminate catabolic process"/>
    <property type="evidence" value="ECO:0007669"/>
    <property type="project" value="UniProtKB-UniRule"/>
</dbReference>
<dbReference type="Gene3D" id="3.30.420.40">
    <property type="match status" value="2"/>
</dbReference>
<dbReference type="HAMAP" id="MF_01234">
    <property type="entry name" value="ManNAc_kinase"/>
    <property type="match status" value="1"/>
</dbReference>
<dbReference type="InterPro" id="IPR043129">
    <property type="entry name" value="ATPase_NBD"/>
</dbReference>
<dbReference type="InterPro" id="IPR023945">
    <property type="entry name" value="ManNAc_kinase_bac"/>
</dbReference>
<dbReference type="InterPro" id="IPR000600">
    <property type="entry name" value="ROK"/>
</dbReference>
<dbReference type="InterPro" id="IPR049874">
    <property type="entry name" value="ROK_cs"/>
</dbReference>
<dbReference type="NCBIfam" id="NF003461">
    <property type="entry name" value="PRK05082.1"/>
    <property type="match status" value="1"/>
</dbReference>
<dbReference type="PANTHER" id="PTHR18964:SF169">
    <property type="entry name" value="N-ACETYLMANNOSAMINE KINASE"/>
    <property type="match status" value="1"/>
</dbReference>
<dbReference type="PANTHER" id="PTHR18964">
    <property type="entry name" value="ROK (REPRESSOR, ORF, KINASE) FAMILY"/>
    <property type="match status" value="1"/>
</dbReference>
<dbReference type="Pfam" id="PF00480">
    <property type="entry name" value="ROK"/>
    <property type="match status" value="1"/>
</dbReference>
<dbReference type="SUPFAM" id="SSF53067">
    <property type="entry name" value="Actin-like ATPase domain"/>
    <property type="match status" value="1"/>
</dbReference>
<dbReference type="PROSITE" id="PS01125">
    <property type="entry name" value="ROK"/>
    <property type="match status" value="1"/>
</dbReference>
<accession>Q8FDU8</accession>
<reference key="1">
    <citation type="journal article" date="2002" name="Proc. Natl. Acad. Sci. U.S.A.">
        <title>Extensive mosaic structure revealed by the complete genome sequence of uropathogenic Escherichia coli.</title>
        <authorList>
            <person name="Welch R.A."/>
            <person name="Burland V."/>
            <person name="Plunkett G. III"/>
            <person name="Redford P."/>
            <person name="Roesch P."/>
            <person name="Rasko D."/>
            <person name="Buckles E.L."/>
            <person name="Liou S.-R."/>
            <person name="Boutin A."/>
            <person name="Hackett J."/>
            <person name="Stroud D."/>
            <person name="Mayhew G.F."/>
            <person name="Rose D.J."/>
            <person name="Zhou S."/>
            <person name="Schwartz D.C."/>
            <person name="Perna N.T."/>
            <person name="Mobley H.L.T."/>
            <person name="Donnenberg M.S."/>
            <person name="Blattner F.R."/>
        </authorList>
    </citation>
    <scope>NUCLEOTIDE SEQUENCE [LARGE SCALE GENOMIC DNA]</scope>
    <source>
        <strain>CFT073 / ATCC 700928 / UPEC</strain>
    </source>
</reference>
<sequence>MITLAVDIGGTKISAALISDDGSFLLKKQISTPHERCPDEMTGALRLLVSEMKGTAERFAVASTGIINNGVLTALNPDNLGGLKEYPLKNIMEDITGLNGSVINDAQAAAWAEYTVLPKEICDMVFITVSTGVGGGIVVNRKLLTGVSGLAGHVGHILSGVTDTECGCGRRGCVEAVSSGRAIMGAAKNKLAGYSTKYIFELARQGYKEAEFLTERSASTIAELIVSLKLLLDCQVVVVGGSVGLADGYVQKVSKHLSIYSEICNVMLFPAYFRSDSGLIGATLWDRDCIT</sequence>
<proteinExistence type="inferred from homology"/>
<evidence type="ECO:0000250" key="1"/>
<evidence type="ECO:0000255" key="2"/>
<evidence type="ECO:0000305" key="3"/>
<comment type="function">
    <text evidence="1">Catalyzes the phosphorylation of N-acetylmannosamine (ManNAc) to ManNAc-6-P.</text>
</comment>
<comment type="catalytic activity">
    <reaction>
        <text>an N-acyl-D-mannosamine + ATP = an N-acyl-D-mannosamine 6-phosphate + ADP + H(+)</text>
        <dbReference type="Rhea" id="RHEA:23832"/>
        <dbReference type="ChEBI" id="CHEBI:15378"/>
        <dbReference type="ChEBI" id="CHEBI:16062"/>
        <dbReference type="ChEBI" id="CHEBI:30616"/>
        <dbReference type="ChEBI" id="CHEBI:57666"/>
        <dbReference type="ChEBI" id="CHEBI:456216"/>
        <dbReference type="EC" id="2.7.1.60"/>
    </reaction>
</comment>
<comment type="pathway">
    <text>Amino-sugar metabolism; N-acetylneuraminate degradation; D-fructose 6-phosphate from N-acetylneuraminate: step 2/5.</text>
</comment>
<comment type="subunit">
    <text evidence="1">Homodimer.</text>
</comment>
<comment type="similarity">
    <text evidence="3">Belongs to the ROK (NagC/XylR) family. NanK subfamily.</text>
</comment>
<gene>
    <name type="primary">nanK2</name>
    <name type="ordered locus">c3638</name>
</gene>
<organism>
    <name type="scientific">Escherichia coli O6:H1 (strain CFT073 / ATCC 700928 / UPEC)</name>
    <dbReference type="NCBI Taxonomy" id="199310"/>
    <lineage>
        <taxon>Bacteria</taxon>
        <taxon>Pseudomonadati</taxon>
        <taxon>Pseudomonadota</taxon>
        <taxon>Gammaproteobacteria</taxon>
        <taxon>Enterobacterales</taxon>
        <taxon>Enterobacteriaceae</taxon>
        <taxon>Escherichia</taxon>
    </lineage>
</organism>